<accession>Q8NVL9</accession>
<sequence>MIKQLYKNITICTLALSTTFTVLPATSYAKINSEIKAVSEKNLDGDTKMYTRTATTSDSQKNITQSLQFNFLTEPNYDKETVFIKAKGTIGSGLRILDPNGYWNSTLRWPGSYSVSIQNVDDNNNTNVTDFAPKNQDESREVKYTYGYKTGGDFSINRGGLTGNITKESNYSETISYQQPSYRTLLDQSTSHKGVGWKVEAHLINNMGHDHTRQLTNDSDNRTKSEIFSLTRNGNLWAKDNFTPKNKMPVTVSEGFNPEFLAVMSHDKKDEGKSKFVVHYKRSMDEFKIDWNRHGFWGYWSGENHVDKKEEKLSALYEVDWKTHNVKFVKVLNDNEKK</sequence>
<keyword id="KW-0732">Signal</keyword>
<evidence type="ECO:0000255" key="1"/>
<evidence type="ECO:0000305" key="2"/>
<protein>
    <recommendedName>
        <fullName>Uncharacterized leukocidin-like protein 1</fullName>
    </recommendedName>
</protein>
<organism>
    <name type="scientific">Staphylococcus aureus (strain MW2)</name>
    <dbReference type="NCBI Taxonomy" id="196620"/>
    <lineage>
        <taxon>Bacteria</taxon>
        <taxon>Bacillati</taxon>
        <taxon>Bacillota</taxon>
        <taxon>Bacilli</taxon>
        <taxon>Bacillales</taxon>
        <taxon>Staphylococcaceae</taxon>
        <taxon>Staphylococcus</taxon>
    </lineage>
</organism>
<gene>
    <name type="ordered locus">MW1941</name>
</gene>
<dbReference type="EMBL" id="BA000033">
    <property type="protein sequence ID" value="BAB95806.1"/>
    <property type="molecule type" value="Genomic_DNA"/>
</dbReference>
<dbReference type="SMR" id="Q8NVL9"/>
<dbReference type="KEGG" id="sam:MW1941"/>
<dbReference type="HOGENOM" id="CLU_055394_0_1_9"/>
<dbReference type="GO" id="GO:0005576">
    <property type="term" value="C:extracellular region"/>
    <property type="evidence" value="ECO:0007669"/>
    <property type="project" value="InterPro"/>
</dbReference>
<dbReference type="GO" id="GO:0051715">
    <property type="term" value="P:cytolysis in another organism"/>
    <property type="evidence" value="ECO:0007669"/>
    <property type="project" value="InterPro"/>
</dbReference>
<dbReference type="Gene3D" id="2.70.240.10">
    <property type="entry name" value="Leukocidin/porin MspA"/>
    <property type="match status" value="1"/>
</dbReference>
<dbReference type="InterPro" id="IPR003963">
    <property type="entry name" value="Bi-component_toxin_staph"/>
</dbReference>
<dbReference type="InterPro" id="IPR016183">
    <property type="entry name" value="Leukocidin/Hemolysin_toxin"/>
</dbReference>
<dbReference type="InterPro" id="IPR036435">
    <property type="entry name" value="Leukocidin/porin_MspA_sf"/>
</dbReference>
<dbReference type="NCBIfam" id="TIGR01002">
    <property type="entry name" value="hlyII"/>
    <property type="match status" value="1"/>
</dbReference>
<dbReference type="Pfam" id="PF07968">
    <property type="entry name" value="Leukocidin"/>
    <property type="match status" value="1"/>
</dbReference>
<dbReference type="PRINTS" id="PR01468">
    <property type="entry name" value="BICOMPNTOXIN"/>
</dbReference>
<dbReference type="SUPFAM" id="SSF56959">
    <property type="entry name" value="Leukocidin-like"/>
    <property type="match status" value="1"/>
</dbReference>
<comment type="similarity">
    <text evidence="2">Belongs to the aerolysin family.</text>
</comment>
<feature type="signal peptide" evidence="1">
    <location>
        <begin position="1"/>
        <end position="29"/>
    </location>
</feature>
<feature type="chain" id="PRO_0000298635" description="Uncharacterized leukocidin-like protein 1">
    <location>
        <begin position="30"/>
        <end position="338"/>
    </location>
</feature>
<reference key="1">
    <citation type="journal article" date="2002" name="Lancet">
        <title>Genome and virulence determinants of high virulence community-acquired MRSA.</title>
        <authorList>
            <person name="Baba T."/>
            <person name="Takeuchi F."/>
            <person name="Kuroda M."/>
            <person name="Yuzawa H."/>
            <person name="Aoki K."/>
            <person name="Oguchi A."/>
            <person name="Nagai Y."/>
            <person name="Iwama N."/>
            <person name="Asano K."/>
            <person name="Naimi T."/>
            <person name="Kuroda H."/>
            <person name="Cui L."/>
            <person name="Yamamoto K."/>
            <person name="Hiramatsu K."/>
        </authorList>
    </citation>
    <scope>NUCLEOTIDE SEQUENCE [LARGE SCALE GENOMIC DNA]</scope>
    <source>
        <strain>MW2</strain>
    </source>
</reference>
<proteinExistence type="inferred from homology"/>
<name>LUKL1_STAAW</name>